<evidence type="ECO:0000255" key="1">
    <source>
        <dbReference type="HAMAP-Rule" id="MF_00180"/>
    </source>
</evidence>
<feature type="chain" id="PRO_0000151795" description="3,4-dihydroxy-2-butanone 4-phosphate synthase">
    <location>
        <begin position="1"/>
        <end position="210"/>
    </location>
</feature>
<feature type="binding site" evidence="1">
    <location>
        <begin position="33"/>
        <end position="34"/>
    </location>
    <ligand>
        <name>D-ribulose 5-phosphate</name>
        <dbReference type="ChEBI" id="CHEBI:58121"/>
    </ligand>
</feature>
<feature type="binding site" evidence="1">
    <location>
        <position position="34"/>
    </location>
    <ligand>
        <name>Mg(2+)</name>
        <dbReference type="ChEBI" id="CHEBI:18420"/>
        <label>1</label>
    </ligand>
</feature>
<feature type="binding site" evidence="1">
    <location>
        <position position="34"/>
    </location>
    <ligand>
        <name>Mg(2+)</name>
        <dbReference type="ChEBI" id="CHEBI:18420"/>
        <label>2</label>
    </ligand>
</feature>
<feature type="binding site" evidence="1">
    <location>
        <position position="38"/>
    </location>
    <ligand>
        <name>D-ribulose 5-phosphate</name>
        <dbReference type="ChEBI" id="CHEBI:58121"/>
    </ligand>
</feature>
<feature type="binding site" evidence="1">
    <location>
        <begin position="146"/>
        <end position="150"/>
    </location>
    <ligand>
        <name>D-ribulose 5-phosphate</name>
        <dbReference type="ChEBI" id="CHEBI:58121"/>
    </ligand>
</feature>
<feature type="binding site" evidence="1">
    <location>
        <position position="149"/>
    </location>
    <ligand>
        <name>Mg(2+)</name>
        <dbReference type="ChEBI" id="CHEBI:18420"/>
        <label>2</label>
    </ligand>
</feature>
<feature type="binding site" evidence="1">
    <location>
        <position position="170"/>
    </location>
    <ligand>
        <name>D-ribulose 5-phosphate</name>
        <dbReference type="ChEBI" id="CHEBI:58121"/>
    </ligand>
</feature>
<feature type="site" description="Essential for catalytic activity" evidence="1">
    <location>
        <position position="132"/>
    </location>
</feature>
<feature type="site" description="Essential for catalytic activity" evidence="1">
    <location>
        <position position="170"/>
    </location>
</feature>
<keyword id="KW-0456">Lyase</keyword>
<keyword id="KW-0460">Magnesium</keyword>
<keyword id="KW-0464">Manganese</keyword>
<keyword id="KW-0479">Metal-binding</keyword>
<keyword id="KW-1185">Reference proteome</keyword>
<keyword id="KW-0686">Riboflavin biosynthesis</keyword>
<sequence length="210" mass="22524">MNANTDILSLRVHAALDALRRGLPVIVADDADRENEADLILAADTLTVPEMARMIRDGSGIVCLCLTPERAERLQLPPMAAENGSRYGTAFTVAIEAAQGVTTGVSAADRTTTIRAAIHPDAKPGDLVRPGHVYPIVARAGGVRERRGHTEASVELARLAGFSPAGVLCELMNPDGTMMRGQQVQDYAERHDLPQLSVAELAEWLQREPA</sequence>
<protein>
    <recommendedName>
        <fullName evidence="1">3,4-dihydroxy-2-butanone 4-phosphate synthase</fullName>
        <shortName evidence="1">DHBP synthase</shortName>
        <ecNumber evidence="1">4.1.99.12</ecNumber>
    </recommendedName>
</protein>
<gene>
    <name evidence="1" type="primary">ribB</name>
    <name type="ordered locus">CV_4216</name>
</gene>
<reference key="1">
    <citation type="journal article" date="2003" name="Proc. Natl. Acad. Sci. U.S.A.">
        <title>The complete genome sequence of Chromobacterium violaceum reveals remarkable and exploitable bacterial adaptability.</title>
        <authorList>
            <person name="Vasconcelos A.T.R."/>
            <person name="de Almeida D.F."/>
            <person name="Hungria M."/>
            <person name="Guimaraes C.T."/>
            <person name="Antonio R.V."/>
            <person name="Almeida F.C."/>
            <person name="de Almeida L.G.P."/>
            <person name="de Almeida R."/>
            <person name="Alves-Gomes J.A."/>
            <person name="Andrade E.M."/>
            <person name="Araripe J."/>
            <person name="de Araujo M.F.F."/>
            <person name="Astolfi-Filho S."/>
            <person name="Azevedo V."/>
            <person name="Baptista A.J."/>
            <person name="Bataus L.A.M."/>
            <person name="Batista J.S."/>
            <person name="Belo A."/>
            <person name="van den Berg C."/>
            <person name="Bogo M."/>
            <person name="Bonatto S."/>
            <person name="Bordignon J."/>
            <person name="Brigido M.M."/>
            <person name="Brito C.A."/>
            <person name="Brocchi M."/>
            <person name="Burity H.A."/>
            <person name="Camargo A.A."/>
            <person name="Cardoso D.D.P."/>
            <person name="Carneiro N.P."/>
            <person name="Carraro D.M."/>
            <person name="Carvalho C.M.B."/>
            <person name="Cascardo J.C.M."/>
            <person name="Cavada B.S."/>
            <person name="Chueire L.M.O."/>
            <person name="Creczynski-Pasa T.B."/>
            <person name="Cunha-Junior N.C."/>
            <person name="Fagundes N."/>
            <person name="Falcao C.L."/>
            <person name="Fantinatti F."/>
            <person name="Farias I.P."/>
            <person name="Felipe M.S.S."/>
            <person name="Ferrari L.P."/>
            <person name="Ferro J.A."/>
            <person name="Ferro M.I.T."/>
            <person name="Franco G.R."/>
            <person name="Freitas N.S.A."/>
            <person name="Furlan L.R."/>
            <person name="Gazzinelli R.T."/>
            <person name="Gomes E.A."/>
            <person name="Goncalves P.R."/>
            <person name="Grangeiro T.B."/>
            <person name="Grattapaglia D."/>
            <person name="Grisard E.C."/>
            <person name="Hanna E.S."/>
            <person name="Jardim S.N."/>
            <person name="Laurino J."/>
            <person name="Leoi L.C.T."/>
            <person name="Lima L.F.A."/>
            <person name="Loureiro M.F."/>
            <person name="Lyra M.C.C.P."/>
            <person name="Madeira H.M.F."/>
            <person name="Manfio G.P."/>
            <person name="Maranhao A.Q."/>
            <person name="Martins W.S."/>
            <person name="di Mauro S.M.Z."/>
            <person name="de Medeiros S.R.B."/>
            <person name="Meissner R.V."/>
            <person name="Moreira M.A.M."/>
            <person name="Nascimento F.F."/>
            <person name="Nicolas M.F."/>
            <person name="Oliveira J.G."/>
            <person name="Oliveira S.C."/>
            <person name="Paixao R.F.C."/>
            <person name="Parente J.A."/>
            <person name="Pedrosa F.O."/>
            <person name="Pena S.D.J."/>
            <person name="Pereira J.O."/>
            <person name="Pereira M."/>
            <person name="Pinto L.S.R.C."/>
            <person name="Pinto L.S."/>
            <person name="Porto J.I.R."/>
            <person name="Potrich D.P."/>
            <person name="Ramalho-Neto C.E."/>
            <person name="Reis A.M.M."/>
            <person name="Rigo L.U."/>
            <person name="Rondinelli E."/>
            <person name="Santos E.B.P."/>
            <person name="Santos F.R."/>
            <person name="Schneider M.P.C."/>
            <person name="Seuanez H.N."/>
            <person name="Silva A.M.R."/>
            <person name="da Silva A.L.C."/>
            <person name="Silva D.W."/>
            <person name="Silva R."/>
            <person name="Simoes I.C."/>
            <person name="Simon D."/>
            <person name="Soares C.M.A."/>
            <person name="Soares R.B.A."/>
            <person name="Souza E.M."/>
            <person name="Souza K.R.L."/>
            <person name="Souza R.C."/>
            <person name="Steffens M.B.R."/>
            <person name="Steindel M."/>
            <person name="Teixeira S.R."/>
            <person name="Urmenyi T."/>
            <person name="Vettore A."/>
            <person name="Wassem R."/>
            <person name="Zaha A."/>
            <person name="Simpson A.J.G."/>
        </authorList>
    </citation>
    <scope>NUCLEOTIDE SEQUENCE [LARGE SCALE GENOMIC DNA]</scope>
    <source>
        <strain>ATCC 12472 / DSM 30191 / JCM 1249 / CCUG 213 / NBRC 12614 / NCIMB 9131 / NCTC 9757 / MK</strain>
    </source>
</reference>
<comment type="function">
    <text evidence="1">Catalyzes the conversion of D-ribulose 5-phosphate to formate and 3,4-dihydroxy-2-butanone 4-phosphate.</text>
</comment>
<comment type="catalytic activity">
    <reaction evidence="1">
        <text>D-ribulose 5-phosphate = (2S)-2-hydroxy-3-oxobutyl phosphate + formate + H(+)</text>
        <dbReference type="Rhea" id="RHEA:18457"/>
        <dbReference type="ChEBI" id="CHEBI:15378"/>
        <dbReference type="ChEBI" id="CHEBI:15740"/>
        <dbReference type="ChEBI" id="CHEBI:58121"/>
        <dbReference type="ChEBI" id="CHEBI:58830"/>
        <dbReference type="EC" id="4.1.99.12"/>
    </reaction>
</comment>
<comment type="cofactor">
    <cofactor evidence="1">
        <name>Mg(2+)</name>
        <dbReference type="ChEBI" id="CHEBI:18420"/>
    </cofactor>
    <cofactor evidence="1">
        <name>Mn(2+)</name>
        <dbReference type="ChEBI" id="CHEBI:29035"/>
    </cofactor>
    <text evidence="1">Binds 2 divalent metal cations per subunit. Magnesium or manganese.</text>
</comment>
<comment type="pathway">
    <text evidence="1">Cofactor biosynthesis; riboflavin biosynthesis; 2-hydroxy-3-oxobutyl phosphate from D-ribulose 5-phosphate: step 1/1.</text>
</comment>
<comment type="subunit">
    <text evidence="1">Homodimer.</text>
</comment>
<comment type="similarity">
    <text evidence="1">Belongs to the DHBP synthase family.</text>
</comment>
<proteinExistence type="inferred from homology"/>
<organism>
    <name type="scientific">Chromobacterium violaceum (strain ATCC 12472 / DSM 30191 / JCM 1249 / CCUG 213 / NBRC 12614 / NCIMB 9131 / NCTC 9757 / MK)</name>
    <dbReference type="NCBI Taxonomy" id="243365"/>
    <lineage>
        <taxon>Bacteria</taxon>
        <taxon>Pseudomonadati</taxon>
        <taxon>Pseudomonadota</taxon>
        <taxon>Betaproteobacteria</taxon>
        <taxon>Neisseriales</taxon>
        <taxon>Chromobacteriaceae</taxon>
        <taxon>Chromobacterium</taxon>
    </lineage>
</organism>
<dbReference type="EC" id="4.1.99.12" evidence="1"/>
<dbReference type="EMBL" id="AE016825">
    <property type="protein sequence ID" value="AAQ61876.1"/>
    <property type="molecule type" value="Genomic_DNA"/>
</dbReference>
<dbReference type="RefSeq" id="WP_011137762.1">
    <property type="nucleotide sequence ID" value="NC_005085.1"/>
</dbReference>
<dbReference type="SMR" id="Q7NQC4"/>
<dbReference type="STRING" id="243365.CV_4216"/>
<dbReference type="GeneID" id="66366306"/>
<dbReference type="KEGG" id="cvi:CV_4216"/>
<dbReference type="eggNOG" id="COG0108">
    <property type="taxonomic scope" value="Bacteria"/>
</dbReference>
<dbReference type="HOGENOM" id="CLU_020273_3_0_4"/>
<dbReference type="OrthoDB" id="9793111at2"/>
<dbReference type="UniPathway" id="UPA00275">
    <property type="reaction ID" value="UER00399"/>
</dbReference>
<dbReference type="Proteomes" id="UP000001424">
    <property type="component" value="Chromosome"/>
</dbReference>
<dbReference type="GO" id="GO:0005829">
    <property type="term" value="C:cytosol"/>
    <property type="evidence" value="ECO:0007669"/>
    <property type="project" value="TreeGrafter"/>
</dbReference>
<dbReference type="GO" id="GO:0008686">
    <property type="term" value="F:3,4-dihydroxy-2-butanone-4-phosphate synthase activity"/>
    <property type="evidence" value="ECO:0007669"/>
    <property type="project" value="UniProtKB-UniRule"/>
</dbReference>
<dbReference type="GO" id="GO:0000287">
    <property type="term" value="F:magnesium ion binding"/>
    <property type="evidence" value="ECO:0007669"/>
    <property type="project" value="UniProtKB-UniRule"/>
</dbReference>
<dbReference type="GO" id="GO:0030145">
    <property type="term" value="F:manganese ion binding"/>
    <property type="evidence" value="ECO:0007669"/>
    <property type="project" value="UniProtKB-UniRule"/>
</dbReference>
<dbReference type="GO" id="GO:0009231">
    <property type="term" value="P:riboflavin biosynthetic process"/>
    <property type="evidence" value="ECO:0007669"/>
    <property type="project" value="UniProtKB-UniRule"/>
</dbReference>
<dbReference type="FunFam" id="3.90.870.10:FF:000002">
    <property type="entry name" value="3,4-dihydroxy-2-butanone 4-phosphate synthase"/>
    <property type="match status" value="1"/>
</dbReference>
<dbReference type="Gene3D" id="3.90.870.10">
    <property type="entry name" value="DHBP synthase"/>
    <property type="match status" value="1"/>
</dbReference>
<dbReference type="HAMAP" id="MF_00180">
    <property type="entry name" value="RibB"/>
    <property type="match status" value="1"/>
</dbReference>
<dbReference type="InterPro" id="IPR017945">
    <property type="entry name" value="DHBP_synth_RibB-like_a/b_dom"/>
</dbReference>
<dbReference type="InterPro" id="IPR000422">
    <property type="entry name" value="DHBP_synthase_RibB"/>
</dbReference>
<dbReference type="NCBIfam" id="TIGR00506">
    <property type="entry name" value="ribB"/>
    <property type="match status" value="1"/>
</dbReference>
<dbReference type="PANTHER" id="PTHR21327:SF38">
    <property type="entry name" value="3,4-DIHYDROXY-2-BUTANONE 4-PHOSPHATE SYNTHASE"/>
    <property type="match status" value="1"/>
</dbReference>
<dbReference type="PANTHER" id="PTHR21327">
    <property type="entry name" value="GTP CYCLOHYDROLASE II-RELATED"/>
    <property type="match status" value="1"/>
</dbReference>
<dbReference type="Pfam" id="PF00926">
    <property type="entry name" value="DHBP_synthase"/>
    <property type="match status" value="1"/>
</dbReference>
<dbReference type="SUPFAM" id="SSF55821">
    <property type="entry name" value="YrdC/RibB"/>
    <property type="match status" value="1"/>
</dbReference>
<name>RIBB_CHRVO</name>
<accession>Q7NQC4</accession>